<sequence length="586" mass="64361">MNVYAIFADHVREAVAALAGELPEAGALDLSRIVVEPPRDAAHGDLATNAAMVLAKDLKMKPRDLAEKIAARLAQVPNVAKVDVAGPGFINLTLDAGYWPGVLAALLRAGTDFGRSDLGGGEAVNVEYVSANPTGPMHVGHCRGAVFGDALASLLAFAGFKVTREYYINDAGAQVDVLARSAYLRYREAATGETVEIPDGLYPGDYLVPVGKTLAEVHGSEYLESPESEWLPIFRTFAIGAMMEMIRDDLQALGISFDVFFSERSLTAAGIDRVGLTIEQLRRTGEVYEGRLPPPKGAPIEDWEDREQSLFRSTAHGDDVDRPLVKSDGSYTYFAGDIAYHKDKFDRGFRRMIDVWGADHGGYVKRMQAAVKAVTAGQATLDVELCQLVRLLRNGEQVRMSKRAGSFVTLREVVDEVGRDAVRFMMLFRKNDATLDFDLAKVIEQSRENPVFYVQYAHARAQSILRNAKEQHADLPESGAIYAHAPLDRLTDEGELGLVKRLAGWPRLVEQAAHAREPHRVAFYLHEVASEFHGQWNRGKDLPHLRFIIENDRELTMARLALVHGVAAVLASGLGLLGVEAVDEMK</sequence>
<gene>
    <name evidence="1" type="primary">argS</name>
    <name type="ordered locus">AZC_2806</name>
</gene>
<reference key="1">
    <citation type="submission" date="2007-04" db="EMBL/GenBank/DDBJ databases">
        <title>Complete genome sequence of the nitrogen-fixing bacterium Azorhizobium caulinodans ORS571.</title>
        <authorList>
            <person name="Lee K.B."/>
            <person name="Backer P.D."/>
            <person name="Aono T."/>
            <person name="Liu C.T."/>
            <person name="Suzuki S."/>
            <person name="Suzuki T."/>
            <person name="Kaneko T."/>
            <person name="Yamada M."/>
            <person name="Tabata S."/>
            <person name="Kupfer D.M."/>
            <person name="Najar F.Z."/>
            <person name="Wiley G.B."/>
            <person name="Roe B."/>
            <person name="Binnewies T."/>
            <person name="Ussery D."/>
            <person name="Vereecke D."/>
            <person name="Gevers D."/>
            <person name="Holsters M."/>
            <person name="Oyaizu H."/>
        </authorList>
    </citation>
    <scope>NUCLEOTIDE SEQUENCE [LARGE SCALE GENOMIC DNA]</scope>
    <source>
        <strain>ATCC 43989 / DSM 5975 / JCM 20966 / LMG 6465 / NBRC 14845 / NCIMB 13405 / ORS 571</strain>
    </source>
</reference>
<keyword id="KW-0030">Aminoacyl-tRNA synthetase</keyword>
<keyword id="KW-0067">ATP-binding</keyword>
<keyword id="KW-0963">Cytoplasm</keyword>
<keyword id="KW-0436">Ligase</keyword>
<keyword id="KW-0547">Nucleotide-binding</keyword>
<keyword id="KW-0648">Protein biosynthesis</keyword>
<keyword id="KW-1185">Reference proteome</keyword>
<organism>
    <name type="scientific">Azorhizobium caulinodans (strain ATCC 43989 / DSM 5975 / JCM 20966 / LMG 6465 / NBRC 14845 / NCIMB 13405 / ORS 571)</name>
    <dbReference type="NCBI Taxonomy" id="438753"/>
    <lineage>
        <taxon>Bacteria</taxon>
        <taxon>Pseudomonadati</taxon>
        <taxon>Pseudomonadota</taxon>
        <taxon>Alphaproteobacteria</taxon>
        <taxon>Hyphomicrobiales</taxon>
        <taxon>Xanthobacteraceae</taxon>
        <taxon>Azorhizobium</taxon>
    </lineage>
</organism>
<proteinExistence type="inferred from homology"/>
<accession>A8I9L7</accession>
<dbReference type="EC" id="6.1.1.19" evidence="1"/>
<dbReference type="EMBL" id="AP009384">
    <property type="protein sequence ID" value="BAF88804.1"/>
    <property type="molecule type" value="Genomic_DNA"/>
</dbReference>
<dbReference type="RefSeq" id="WP_012171330.1">
    <property type="nucleotide sequence ID" value="NC_009937.1"/>
</dbReference>
<dbReference type="SMR" id="A8I9L7"/>
<dbReference type="STRING" id="438753.AZC_2806"/>
<dbReference type="KEGG" id="azc:AZC_2806"/>
<dbReference type="eggNOG" id="COG0018">
    <property type="taxonomic scope" value="Bacteria"/>
</dbReference>
<dbReference type="HOGENOM" id="CLU_006406_0_1_5"/>
<dbReference type="Proteomes" id="UP000000270">
    <property type="component" value="Chromosome"/>
</dbReference>
<dbReference type="GO" id="GO:0005737">
    <property type="term" value="C:cytoplasm"/>
    <property type="evidence" value="ECO:0007669"/>
    <property type="project" value="UniProtKB-SubCell"/>
</dbReference>
<dbReference type="GO" id="GO:0004814">
    <property type="term" value="F:arginine-tRNA ligase activity"/>
    <property type="evidence" value="ECO:0007669"/>
    <property type="project" value="UniProtKB-UniRule"/>
</dbReference>
<dbReference type="GO" id="GO:0005524">
    <property type="term" value="F:ATP binding"/>
    <property type="evidence" value="ECO:0007669"/>
    <property type="project" value="UniProtKB-UniRule"/>
</dbReference>
<dbReference type="GO" id="GO:0006420">
    <property type="term" value="P:arginyl-tRNA aminoacylation"/>
    <property type="evidence" value="ECO:0007669"/>
    <property type="project" value="UniProtKB-UniRule"/>
</dbReference>
<dbReference type="CDD" id="cd00671">
    <property type="entry name" value="ArgRS_core"/>
    <property type="match status" value="1"/>
</dbReference>
<dbReference type="FunFam" id="1.10.730.10:FF:000008">
    <property type="entry name" value="Arginine--tRNA ligase"/>
    <property type="match status" value="1"/>
</dbReference>
<dbReference type="FunFam" id="3.40.50.620:FF:000062">
    <property type="entry name" value="Arginine--tRNA ligase"/>
    <property type="match status" value="1"/>
</dbReference>
<dbReference type="Gene3D" id="3.30.1360.70">
    <property type="entry name" value="Arginyl tRNA synthetase N-terminal domain"/>
    <property type="match status" value="1"/>
</dbReference>
<dbReference type="Gene3D" id="3.40.50.620">
    <property type="entry name" value="HUPs"/>
    <property type="match status" value="1"/>
</dbReference>
<dbReference type="Gene3D" id="1.10.730.10">
    <property type="entry name" value="Isoleucyl-tRNA Synthetase, Domain 1"/>
    <property type="match status" value="1"/>
</dbReference>
<dbReference type="HAMAP" id="MF_00123">
    <property type="entry name" value="Arg_tRNA_synth"/>
    <property type="match status" value="1"/>
</dbReference>
<dbReference type="InterPro" id="IPR001412">
    <property type="entry name" value="aa-tRNA-synth_I_CS"/>
</dbReference>
<dbReference type="InterPro" id="IPR001278">
    <property type="entry name" value="Arg-tRNA-ligase"/>
</dbReference>
<dbReference type="InterPro" id="IPR005148">
    <property type="entry name" value="Arg-tRNA-synth_N"/>
</dbReference>
<dbReference type="InterPro" id="IPR036695">
    <property type="entry name" value="Arg-tRNA-synth_N_sf"/>
</dbReference>
<dbReference type="InterPro" id="IPR035684">
    <property type="entry name" value="ArgRS_core"/>
</dbReference>
<dbReference type="InterPro" id="IPR008909">
    <property type="entry name" value="DALR_anticod-bd"/>
</dbReference>
<dbReference type="InterPro" id="IPR014729">
    <property type="entry name" value="Rossmann-like_a/b/a_fold"/>
</dbReference>
<dbReference type="InterPro" id="IPR009080">
    <property type="entry name" value="tRNAsynth_Ia_anticodon-bd"/>
</dbReference>
<dbReference type="NCBIfam" id="TIGR00456">
    <property type="entry name" value="argS"/>
    <property type="match status" value="1"/>
</dbReference>
<dbReference type="PANTHER" id="PTHR11956:SF5">
    <property type="entry name" value="ARGININE--TRNA LIGASE, CYTOPLASMIC"/>
    <property type="match status" value="1"/>
</dbReference>
<dbReference type="PANTHER" id="PTHR11956">
    <property type="entry name" value="ARGINYL-TRNA SYNTHETASE"/>
    <property type="match status" value="1"/>
</dbReference>
<dbReference type="Pfam" id="PF03485">
    <property type="entry name" value="Arg_tRNA_synt_N"/>
    <property type="match status" value="1"/>
</dbReference>
<dbReference type="Pfam" id="PF05746">
    <property type="entry name" value="DALR_1"/>
    <property type="match status" value="1"/>
</dbReference>
<dbReference type="Pfam" id="PF00750">
    <property type="entry name" value="tRNA-synt_1d"/>
    <property type="match status" value="2"/>
</dbReference>
<dbReference type="PRINTS" id="PR01038">
    <property type="entry name" value="TRNASYNTHARG"/>
</dbReference>
<dbReference type="SMART" id="SM01016">
    <property type="entry name" value="Arg_tRNA_synt_N"/>
    <property type="match status" value="1"/>
</dbReference>
<dbReference type="SMART" id="SM00836">
    <property type="entry name" value="DALR_1"/>
    <property type="match status" value="1"/>
</dbReference>
<dbReference type="SUPFAM" id="SSF47323">
    <property type="entry name" value="Anticodon-binding domain of a subclass of class I aminoacyl-tRNA synthetases"/>
    <property type="match status" value="1"/>
</dbReference>
<dbReference type="SUPFAM" id="SSF55190">
    <property type="entry name" value="Arginyl-tRNA synthetase (ArgRS), N-terminal 'additional' domain"/>
    <property type="match status" value="1"/>
</dbReference>
<dbReference type="SUPFAM" id="SSF52374">
    <property type="entry name" value="Nucleotidylyl transferase"/>
    <property type="match status" value="1"/>
</dbReference>
<dbReference type="PROSITE" id="PS00178">
    <property type="entry name" value="AA_TRNA_LIGASE_I"/>
    <property type="match status" value="1"/>
</dbReference>
<evidence type="ECO:0000255" key="1">
    <source>
        <dbReference type="HAMAP-Rule" id="MF_00123"/>
    </source>
</evidence>
<protein>
    <recommendedName>
        <fullName evidence="1">Arginine--tRNA ligase</fullName>
        <ecNumber evidence="1">6.1.1.19</ecNumber>
    </recommendedName>
    <alternativeName>
        <fullName evidence="1">Arginyl-tRNA synthetase</fullName>
        <shortName evidence="1">ArgRS</shortName>
    </alternativeName>
</protein>
<comment type="catalytic activity">
    <reaction evidence="1">
        <text>tRNA(Arg) + L-arginine + ATP = L-arginyl-tRNA(Arg) + AMP + diphosphate</text>
        <dbReference type="Rhea" id="RHEA:20301"/>
        <dbReference type="Rhea" id="RHEA-COMP:9658"/>
        <dbReference type="Rhea" id="RHEA-COMP:9673"/>
        <dbReference type="ChEBI" id="CHEBI:30616"/>
        <dbReference type="ChEBI" id="CHEBI:32682"/>
        <dbReference type="ChEBI" id="CHEBI:33019"/>
        <dbReference type="ChEBI" id="CHEBI:78442"/>
        <dbReference type="ChEBI" id="CHEBI:78513"/>
        <dbReference type="ChEBI" id="CHEBI:456215"/>
        <dbReference type="EC" id="6.1.1.19"/>
    </reaction>
</comment>
<comment type="subunit">
    <text evidence="1">Monomer.</text>
</comment>
<comment type="subcellular location">
    <subcellularLocation>
        <location evidence="1">Cytoplasm</location>
    </subcellularLocation>
</comment>
<comment type="similarity">
    <text evidence="1">Belongs to the class-I aminoacyl-tRNA synthetase family.</text>
</comment>
<feature type="chain" id="PRO_1000071393" description="Arginine--tRNA ligase">
    <location>
        <begin position="1"/>
        <end position="586"/>
    </location>
</feature>
<feature type="short sequence motif" description="'HIGH' region">
    <location>
        <begin position="131"/>
        <end position="141"/>
    </location>
</feature>
<name>SYR_AZOC5</name>